<gene>
    <name evidence="1" type="primary">fabV</name>
    <name type="ordered locus">Bcen2424_5454</name>
</gene>
<organism>
    <name type="scientific">Burkholderia cenocepacia (strain HI2424)</name>
    <dbReference type="NCBI Taxonomy" id="331272"/>
    <lineage>
        <taxon>Bacteria</taxon>
        <taxon>Pseudomonadati</taxon>
        <taxon>Pseudomonadota</taxon>
        <taxon>Betaproteobacteria</taxon>
        <taxon>Burkholderiales</taxon>
        <taxon>Burkholderiaceae</taxon>
        <taxon>Burkholderia</taxon>
        <taxon>Burkholderia cepacia complex</taxon>
    </lineage>
</organism>
<reference key="1">
    <citation type="submission" date="2006-08" db="EMBL/GenBank/DDBJ databases">
        <title>Complete sequence of chromosome 2 of Burkholderia cenocepacia HI2424.</title>
        <authorList>
            <person name="Copeland A."/>
            <person name="Lucas S."/>
            <person name="Lapidus A."/>
            <person name="Barry K."/>
            <person name="Detter J.C."/>
            <person name="Glavina del Rio T."/>
            <person name="Hammon N."/>
            <person name="Israni S."/>
            <person name="Pitluck S."/>
            <person name="Chain P."/>
            <person name="Malfatti S."/>
            <person name="Shin M."/>
            <person name="Vergez L."/>
            <person name="Schmutz J."/>
            <person name="Larimer F."/>
            <person name="Land M."/>
            <person name="Hauser L."/>
            <person name="Kyrpides N."/>
            <person name="Kim E."/>
            <person name="LiPuma J.J."/>
            <person name="Gonzalez C.F."/>
            <person name="Konstantinidis K."/>
            <person name="Tiedje J.M."/>
            <person name="Richardson P."/>
        </authorList>
    </citation>
    <scope>NUCLEOTIDE SEQUENCE [LARGE SCALE GENOMIC DNA]</scope>
    <source>
        <strain>HI2424</strain>
    </source>
</reference>
<comment type="function">
    <text evidence="1">Involved in the final reduction of the elongation cycle of fatty acid synthesis (FAS II). Catalyzes the reduction of a carbon-carbon double bond in an enoyl moiety that is covalently linked to an acyl carrier protein (ACP).</text>
</comment>
<comment type="catalytic activity">
    <reaction evidence="1">
        <text>a 2,3-saturated acyl-[ACP] + NAD(+) = a (2E)-enoyl-[ACP] + NADH + H(+)</text>
        <dbReference type="Rhea" id="RHEA:10240"/>
        <dbReference type="Rhea" id="RHEA-COMP:9925"/>
        <dbReference type="Rhea" id="RHEA-COMP:9926"/>
        <dbReference type="ChEBI" id="CHEBI:15378"/>
        <dbReference type="ChEBI" id="CHEBI:57540"/>
        <dbReference type="ChEBI" id="CHEBI:57945"/>
        <dbReference type="ChEBI" id="CHEBI:78784"/>
        <dbReference type="ChEBI" id="CHEBI:78785"/>
        <dbReference type="EC" id="1.3.1.9"/>
    </reaction>
</comment>
<comment type="pathway">
    <text evidence="1">Lipid metabolism; fatty acid biosynthesis.</text>
</comment>
<comment type="subunit">
    <text evidence="1">Monomer.</text>
</comment>
<comment type="similarity">
    <text evidence="1">Belongs to the TER reductase family.</text>
</comment>
<accession>A0B3G1</accession>
<evidence type="ECO:0000255" key="1">
    <source>
        <dbReference type="HAMAP-Rule" id="MF_01838"/>
    </source>
</evidence>
<proteinExistence type="inferred from homology"/>
<sequence>MIIKPRVRGFICVTTHPVGCEANVKEQIDYVTSHGPIANGPKKVLVIGASTGYGLAARISAAFGSGADTLGVFFERAGSETKPGTAGWYNSAAFEKFAAEKGLYARSINGDAFSDKVKQVTIDTIKQDLGKVDLVVYSLAAPRRTHPKTGETISSTLKPVGKAVTFRGLDTDKEVIREVSLEPATQEEIDGTVAVMGGEDWQMWIDALDEAGVLADGAKTTAFTYLGEQITHDIYWNGSIGEAKKDLDKKVLSIRDKLAAHGGDARVSVLKAVVTQASSAIPMMPLYLSLLFKVMKETGTHEGCIEQVYGLLKDSLYGATPHVDEEGRLRADYKELDPQVQDKVVAMWDKVTNENLYEMTDFAGYKTEFLRLFGFEIAGVDYDADVNPDVKIPGIIDTTV</sequence>
<feature type="chain" id="PRO_1000070467" description="Enoyl-[acyl-carrier-protein] reductase [NADH]">
    <location>
        <begin position="1"/>
        <end position="400"/>
    </location>
</feature>
<feature type="active site" description="Proton donor" evidence="1">
    <location>
        <position position="235"/>
    </location>
</feature>
<feature type="binding site" evidence="1">
    <location>
        <begin position="48"/>
        <end position="53"/>
    </location>
    <ligand>
        <name>NAD(+)</name>
        <dbReference type="ChEBI" id="CHEBI:57540"/>
    </ligand>
</feature>
<feature type="binding site" evidence="1">
    <location>
        <begin position="74"/>
        <end position="75"/>
    </location>
    <ligand>
        <name>NAD(+)</name>
        <dbReference type="ChEBI" id="CHEBI:57540"/>
    </ligand>
</feature>
<feature type="binding site" evidence="1">
    <location>
        <begin position="111"/>
        <end position="112"/>
    </location>
    <ligand>
        <name>NAD(+)</name>
        <dbReference type="ChEBI" id="CHEBI:57540"/>
    </ligand>
</feature>
<feature type="binding site" evidence="1">
    <location>
        <begin position="139"/>
        <end position="140"/>
    </location>
    <ligand>
        <name>NAD(+)</name>
        <dbReference type="ChEBI" id="CHEBI:57540"/>
    </ligand>
</feature>
<feature type="binding site" evidence="1">
    <location>
        <position position="225"/>
    </location>
    <ligand>
        <name>substrate</name>
    </ligand>
</feature>
<feature type="binding site" evidence="1">
    <location>
        <position position="244"/>
    </location>
    <ligand>
        <name>NAD(+)</name>
        <dbReference type="ChEBI" id="CHEBI:57540"/>
    </ligand>
</feature>
<feature type="binding site" evidence="1">
    <location>
        <begin position="273"/>
        <end position="275"/>
    </location>
    <ligand>
        <name>NAD(+)</name>
        <dbReference type="ChEBI" id="CHEBI:57540"/>
    </ligand>
</feature>
<feature type="site" description="Plays an important role in discriminating NADH against NADPH" evidence="1">
    <location>
        <position position="75"/>
    </location>
</feature>
<keyword id="KW-0275">Fatty acid biosynthesis</keyword>
<keyword id="KW-0276">Fatty acid metabolism</keyword>
<keyword id="KW-0444">Lipid biosynthesis</keyword>
<keyword id="KW-0443">Lipid metabolism</keyword>
<keyword id="KW-0520">NAD</keyword>
<keyword id="KW-0560">Oxidoreductase</keyword>
<name>FABV_BURCH</name>
<dbReference type="EC" id="1.3.1.9" evidence="1"/>
<dbReference type="EMBL" id="CP000459">
    <property type="protein sequence ID" value="ABK12187.1"/>
    <property type="molecule type" value="Genomic_DNA"/>
</dbReference>
<dbReference type="RefSeq" id="WP_011548967.1">
    <property type="nucleotide sequence ID" value="NC_008543.1"/>
</dbReference>
<dbReference type="SMR" id="A0B3G1"/>
<dbReference type="GeneID" id="83051521"/>
<dbReference type="KEGG" id="bch:Bcen2424_5454"/>
<dbReference type="HOGENOM" id="CLU_057698_1_0_4"/>
<dbReference type="UniPathway" id="UPA00094"/>
<dbReference type="GO" id="GO:0004318">
    <property type="term" value="F:enoyl-[acyl-carrier-protein] reductase (NADH) activity"/>
    <property type="evidence" value="ECO:0007669"/>
    <property type="project" value="UniProtKB-UniRule"/>
</dbReference>
<dbReference type="GO" id="GO:0051287">
    <property type="term" value="F:NAD binding"/>
    <property type="evidence" value="ECO:0007669"/>
    <property type="project" value="UniProtKB-UniRule"/>
</dbReference>
<dbReference type="GO" id="GO:0050343">
    <property type="term" value="F:trans-2-enoyl-CoA reductase (NADH) activity"/>
    <property type="evidence" value="ECO:0007669"/>
    <property type="project" value="TreeGrafter"/>
</dbReference>
<dbReference type="GO" id="GO:0006633">
    <property type="term" value="P:fatty acid biosynthetic process"/>
    <property type="evidence" value="ECO:0007669"/>
    <property type="project" value="UniProtKB-UniRule"/>
</dbReference>
<dbReference type="FunFam" id="3.40.50.720:FF:000221">
    <property type="entry name" value="Enoyl-[acyl-carrier-protein] reductase [NADH]"/>
    <property type="match status" value="1"/>
</dbReference>
<dbReference type="Gene3D" id="3.40.50.720">
    <property type="entry name" value="NAD(P)-binding Rossmann-like Domain"/>
    <property type="match status" value="1"/>
</dbReference>
<dbReference type="HAMAP" id="MF_01838">
    <property type="entry name" value="FabV_reductase"/>
    <property type="match status" value="1"/>
</dbReference>
<dbReference type="InterPro" id="IPR024906">
    <property type="entry name" value="Eno_Rdtase_FAD-bd_dom"/>
</dbReference>
<dbReference type="InterPro" id="IPR024910">
    <property type="entry name" value="Enoyl-CoA_Rdtase_cat_dom"/>
</dbReference>
<dbReference type="InterPro" id="IPR050048">
    <property type="entry name" value="FabV-like_NADH_b"/>
</dbReference>
<dbReference type="InterPro" id="IPR010758">
    <property type="entry name" value="Trans-2-enoyl-CoA_reductase"/>
</dbReference>
<dbReference type="NCBIfam" id="NF043048">
    <property type="entry name" value="EnoyACPredFabV"/>
    <property type="match status" value="1"/>
</dbReference>
<dbReference type="NCBIfam" id="NF010177">
    <property type="entry name" value="PRK13656.1"/>
    <property type="match status" value="1"/>
</dbReference>
<dbReference type="PANTHER" id="PTHR37480">
    <property type="entry name" value="ENOYL-[ACYL-CARRIER-PROTEIN] REDUCTASE [NADH]"/>
    <property type="match status" value="1"/>
</dbReference>
<dbReference type="PANTHER" id="PTHR37480:SF1">
    <property type="entry name" value="ENOYL-[ACYL-CARRIER-PROTEIN] REDUCTASE [NADH]"/>
    <property type="match status" value="1"/>
</dbReference>
<dbReference type="Pfam" id="PF07055">
    <property type="entry name" value="Eno-Rase_FAD_bd"/>
    <property type="match status" value="1"/>
</dbReference>
<dbReference type="Pfam" id="PF12242">
    <property type="entry name" value="Eno-Rase_NADH_b"/>
    <property type="match status" value="1"/>
</dbReference>
<dbReference type="Pfam" id="PF12241">
    <property type="entry name" value="Enoyl_reductase"/>
    <property type="match status" value="1"/>
</dbReference>
<protein>
    <recommendedName>
        <fullName evidence="1">Enoyl-[acyl-carrier-protein] reductase [NADH]</fullName>
        <shortName evidence="1">ENR</shortName>
        <ecNumber evidence="1">1.3.1.9</ecNumber>
    </recommendedName>
</protein>